<name>RS14Z_CLOPS</name>
<comment type="function">
    <text evidence="1">Binds 16S rRNA, required for the assembly of 30S particles and may also be responsible for determining the conformation of the 16S rRNA at the A site.</text>
</comment>
<comment type="cofactor">
    <cofactor evidence="1">
        <name>Zn(2+)</name>
        <dbReference type="ChEBI" id="CHEBI:29105"/>
    </cofactor>
    <text evidence="1">Binds 1 zinc ion per subunit.</text>
</comment>
<comment type="subunit">
    <text evidence="1">Part of the 30S ribosomal subunit. Contacts proteins S3 and S10.</text>
</comment>
<comment type="similarity">
    <text evidence="1">Belongs to the universal ribosomal protein uS14 family. Zinc-binding uS14 subfamily.</text>
</comment>
<comment type="sequence caution" evidence="2">
    <conflict type="erroneous initiation">
        <sequence resource="EMBL-CDS" id="ABG86462"/>
    </conflict>
</comment>
<sequence length="61" mass="7280">MARKAMIEKWKKEPKYKTRAYTRCRLCGRPHSVLKKFGICRICFRELAYKGEIPGCRKASW</sequence>
<accession>Q0SQF7</accession>
<gene>
    <name evidence="1" type="primary">rpsZ</name>
    <name evidence="1" type="synonym">rpsN</name>
    <name type="ordered locus">CPR_2386</name>
</gene>
<keyword id="KW-0479">Metal-binding</keyword>
<keyword id="KW-0687">Ribonucleoprotein</keyword>
<keyword id="KW-0689">Ribosomal protein</keyword>
<keyword id="KW-0694">RNA-binding</keyword>
<keyword id="KW-0699">rRNA-binding</keyword>
<keyword id="KW-0862">Zinc</keyword>
<dbReference type="EMBL" id="CP000312">
    <property type="protein sequence ID" value="ABG86462.1"/>
    <property type="status" value="ALT_INIT"/>
    <property type="molecule type" value="Genomic_DNA"/>
</dbReference>
<dbReference type="RefSeq" id="WP_003470274.1">
    <property type="nucleotide sequence ID" value="NZ_CAXVKH010000004.1"/>
</dbReference>
<dbReference type="SMR" id="Q0SQF7"/>
<dbReference type="KEGG" id="cpr:CPR_2386"/>
<dbReference type="Proteomes" id="UP000001824">
    <property type="component" value="Chromosome"/>
</dbReference>
<dbReference type="GO" id="GO:0005737">
    <property type="term" value="C:cytoplasm"/>
    <property type="evidence" value="ECO:0007669"/>
    <property type="project" value="UniProtKB-ARBA"/>
</dbReference>
<dbReference type="GO" id="GO:0015935">
    <property type="term" value="C:small ribosomal subunit"/>
    <property type="evidence" value="ECO:0007669"/>
    <property type="project" value="TreeGrafter"/>
</dbReference>
<dbReference type="GO" id="GO:0019843">
    <property type="term" value="F:rRNA binding"/>
    <property type="evidence" value="ECO:0007669"/>
    <property type="project" value="UniProtKB-UniRule"/>
</dbReference>
<dbReference type="GO" id="GO:0003735">
    <property type="term" value="F:structural constituent of ribosome"/>
    <property type="evidence" value="ECO:0007669"/>
    <property type="project" value="InterPro"/>
</dbReference>
<dbReference type="GO" id="GO:0008270">
    <property type="term" value="F:zinc ion binding"/>
    <property type="evidence" value="ECO:0007669"/>
    <property type="project" value="UniProtKB-UniRule"/>
</dbReference>
<dbReference type="GO" id="GO:0006412">
    <property type="term" value="P:translation"/>
    <property type="evidence" value="ECO:0007669"/>
    <property type="project" value="UniProtKB-UniRule"/>
</dbReference>
<dbReference type="FunFam" id="4.10.830.10:FF:000001">
    <property type="entry name" value="30S ribosomal protein S14 type Z"/>
    <property type="match status" value="1"/>
</dbReference>
<dbReference type="Gene3D" id="4.10.830.10">
    <property type="entry name" value="30s Ribosomal Protein S14, Chain N"/>
    <property type="match status" value="1"/>
</dbReference>
<dbReference type="HAMAP" id="MF_01364_B">
    <property type="entry name" value="Ribosomal_uS14_2_B"/>
    <property type="match status" value="1"/>
</dbReference>
<dbReference type="InterPro" id="IPR001209">
    <property type="entry name" value="Ribosomal_uS14"/>
</dbReference>
<dbReference type="InterPro" id="IPR023053">
    <property type="entry name" value="Ribosomal_uS14_bact"/>
</dbReference>
<dbReference type="InterPro" id="IPR018271">
    <property type="entry name" value="Ribosomal_uS14_CS"/>
</dbReference>
<dbReference type="InterPro" id="IPR043140">
    <property type="entry name" value="Ribosomal_uS14_sf"/>
</dbReference>
<dbReference type="NCBIfam" id="NF005974">
    <property type="entry name" value="PRK08061.1"/>
    <property type="match status" value="1"/>
</dbReference>
<dbReference type="PANTHER" id="PTHR19836">
    <property type="entry name" value="30S RIBOSOMAL PROTEIN S14"/>
    <property type="match status" value="1"/>
</dbReference>
<dbReference type="PANTHER" id="PTHR19836:SF19">
    <property type="entry name" value="SMALL RIBOSOMAL SUBUNIT PROTEIN US14M"/>
    <property type="match status" value="1"/>
</dbReference>
<dbReference type="Pfam" id="PF00253">
    <property type="entry name" value="Ribosomal_S14"/>
    <property type="match status" value="1"/>
</dbReference>
<dbReference type="SUPFAM" id="SSF57716">
    <property type="entry name" value="Glucocorticoid receptor-like (DNA-binding domain)"/>
    <property type="match status" value="1"/>
</dbReference>
<dbReference type="PROSITE" id="PS00527">
    <property type="entry name" value="RIBOSOMAL_S14"/>
    <property type="match status" value="1"/>
</dbReference>
<protein>
    <recommendedName>
        <fullName evidence="1">Small ribosomal subunit protein uS14</fullName>
    </recommendedName>
    <alternativeName>
        <fullName evidence="2">30S ribosomal protein S14 type Z</fullName>
    </alternativeName>
</protein>
<feature type="chain" id="PRO_0000269092" description="Small ribosomal subunit protein uS14">
    <location>
        <begin position="1"/>
        <end position="61"/>
    </location>
</feature>
<feature type="binding site" evidence="1">
    <location>
        <position position="24"/>
    </location>
    <ligand>
        <name>Zn(2+)</name>
        <dbReference type="ChEBI" id="CHEBI:29105"/>
    </ligand>
</feature>
<feature type="binding site" evidence="1">
    <location>
        <position position="27"/>
    </location>
    <ligand>
        <name>Zn(2+)</name>
        <dbReference type="ChEBI" id="CHEBI:29105"/>
    </ligand>
</feature>
<feature type="binding site" evidence="1">
    <location>
        <position position="40"/>
    </location>
    <ligand>
        <name>Zn(2+)</name>
        <dbReference type="ChEBI" id="CHEBI:29105"/>
    </ligand>
</feature>
<feature type="binding site" evidence="1">
    <location>
        <position position="43"/>
    </location>
    <ligand>
        <name>Zn(2+)</name>
        <dbReference type="ChEBI" id="CHEBI:29105"/>
    </ligand>
</feature>
<reference key="1">
    <citation type="journal article" date="2006" name="Genome Res.">
        <title>Skewed genomic variability in strains of the toxigenic bacterial pathogen, Clostridium perfringens.</title>
        <authorList>
            <person name="Myers G.S.A."/>
            <person name="Rasko D.A."/>
            <person name="Cheung J.K."/>
            <person name="Ravel J."/>
            <person name="Seshadri R."/>
            <person name="DeBoy R.T."/>
            <person name="Ren Q."/>
            <person name="Varga J."/>
            <person name="Awad M.M."/>
            <person name="Brinkac L.M."/>
            <person name="Daugherty S.C."/>
            <person name="Haft D.H."/>
            <person name="Dodson R.J."/>
            <person name="Madupu R."/>
            <person name="Nelson W.C."/>
            <person name="Rosovitz M.J."/>
            <person name="Sullivan S.A."/>
            <person name="Khouri H."/>
            <person name="Dimitrov G.I."/>
            <person name="Watkins K.L."/>
            <person name="Mulligan S."/>
            <person name="Benton J."/>
            <person name="Radune D."/>
            <person name="Fisher D.J."/>
            <person name="Atkins H.S."/>
            <person name="Hiscox T."/>
            <person name="Jost B.H."/>
            <person name="Billington S.J."/>
            <person name="Songer J.G."/>
            <person name="McClane B.A."/>
            <person name="Titball R.W."/>
            <person name="Rood J.I."/>
            <person name="Melville S.B."/>
            <person name="Paulsen I.T."/>
        </authorList>
    </citation>
    <scope>NUCLEOTIDE SEQUENCE [LARGE SCALE GENOMIC DNA]</scope>
    <source>
        <strain>SM101 / Type A</strain>
    </source>
</reference>
<organism>
    <name type="scientific">Clostridium perfringens (strain SM101 / Type A)</name>
    <dbReference type="NCBI Taxonomy" id="289380"/>
    <lineage>
        <taxon>Bacteria</taxon>
        <taxon>Bacillati</taxon>
        <taxon>Bacillota</taxon>
        <taxon>Clostridia</taxon>
        <taxon>Eubacteriales</taxon>
        <taxon>Clostridiaceae</taxon>
        <taxon>Clostridium</taxon>
    </lineage>
</organism>
<evidence type="ECO:0000255" key="1">
    <source>
        <dbReference type="HAMAP-Rule" id="MF_01364"/>
    </source>
</evidence>
<evidence type="ECO:0000305" key="2"/>
<proteinExistence type="inferred from homology"/>